<proteinExistence type="inferred from homology"/>
<dbReference type="EC" id="2.7.7.23" evidence="1"/>
<dbReference type="EC" id="2.3.1.157" evidence="1"/>
<dbReference type="EMBL" id="AP009240">
    <property type="protein sequence ID" value="BAG79544.1"/>
    <property type="molecule type" value="Genomic_DNA"/>
</dbReference>
<dbReference type="RefSeq" id="WP_000933736.1">
    <property type="nucleotide sequence ID" value="NC_011415.1"/>
</dbReference>
<dbReference type="SMR" id="B6I3W7"/>
<dbReference type="GeneID" id="75205448"/>
<dbReference type="KEGG" id="ecy:ECSE_4020"/>
<dbReference type="HOGENOM" id="CLU_029499_15_2_6"/>
<dbReference type="UniPathway" id="UPA00113">
    <property type="reaction ID" value="UER00532"/>
</dbReference>
<dbReference type="UniPathway" id="UPA00113">
    <property type="reaction ID" value="UER00533"/>
</dbReference>
<dbReference type="UniPathway" id="UPA00973"/>
<dbReference type="Proteomes" id="UP000008199">
    <property type="component" value="Chromosome"/>
</dbReference>
<dbReference type="GO" id="GO:0005737">
    <property type="term" value="C:cytoplasm"/>
    <property type="evidence" value="ECO:0007669"/>
    <property type="project" value="UniProtKB-SubCell"/>
</dbReference>
<dbReference type="GO" id="GO:0016020">
    <property type="term" value="C:membrane"/>
    <property type="evidence" value="ECO:0007669"/>
    <property type="project" value="GOC"/>
</dbReference>
<dbReference type="GO" id="GO:0019134">
    <property type="term" value="F:glucosamine-1-phosphate N-acetyltransferase activity"/>
    <property type="evidence" value="ECO:0007669"/>
    <property type="project" value="UniProtKB-UniRule"/>
</dbReference>
<dbReference type="GO" id="GO:0000287">
    <property type="term" value="F:magnesium ion binding"/>
    <property type="evidence" value="ECO:0007669"/>
    <property type="project" value="UniProtKB-UniRule"/>
</dbReference>
<dbReference type="GO" id="GO:0003977">
    <property type="term" value="F:UDP-N-acetylglucosamine diphosphorylase activity"/>
    <property type="evidence" value="ECO:0007669"/>
    <property type="project" value="UniProtKB-UniRule"/>
</dbReference>
<dbReference type="GO" id="GO:0000902">
    <property type="term" value="P:cell morphogenesis"/>
    <property type="evidence" value="ECO:0007669"/>
    <property type="project" value="UniProtKB-UniRule"/>
</dbReference>
<dbReference type="GO" id="GO:0071555">
    <property type="term" value="P:cell wall organization"/>
    <property type="evidence" value="ECO:0007669"/>
    <property type="project" value="UniProtKB-KW"/>
</dbReference>
<dbReference type="GO" id="GO:0009245">
    <property type="term" value="P:lipid A biosynthetic process"/>
    <property type="evidence" value="ECO:0007669"/>
    <property type="project" value="UniProtKB-UniRule"/>
</dbReference>
<dbReference type="GO" id="GO:0009252">
    <property type="term" value="P:peptidoglycan biosynthetic process"/>
    <property type="evidence" value="ECO:0007669"/>
    <property type="project" value="UniProtKB-UniRule"/>
</dbReference>
<dbReference type="GO" id="GO:0008360">
    <property type="term" value="P:regulation of cell shape"/>
    <property type="evidence" value="ECO:0007669"/>
    <property type="project" value="UniProtKB-KW"/>
</dbReference>
<dbReference type="GO" id="GO:0006048">
    <property type="term" value="P:UDP-N-acetylglucosamine biosynthetic process"/>
    <property type="evidence" value="ECO:0007669"/>
    <property type="project" value="UniProtKB-UniPathway"/>
</dbReference>
<dbReference type="CDD" id="cd02540">
    <property type="entry name" value="GT2_GlmU_N_bac"/>
    <property type="match status" value="1"/>
</dbReference>
<dbReference type="CDD" id="cd03353">
    <property type="entry name" value="LbH_GlmU_C"/>
    <property type="match status" value="1"/>
</dbReference>
<dbReference type="FunFam" id="2.160.10.10:FF:000011">
    <property type="entry name" value="Bifunctional protein GlmU"/>
    <property type="match status" value="1"/>
</dbReference>
<dbReference type="FunFam" id="3.90.550.10:FF:000006">
    <property type="entry name" value="Bifunctional protein GlmU"/>
    <property type="match status" value="1"/>
</dbReference>
<dbReference type="Gene3D" id="2.160.10.10">
    <property type="entry name" value="Hexapeptide repeat proteins"/>
    <property type="match status" value="1"/>
</dbReference>
<dbReference type="Gene3D" id="3.90.550.10">
    <property type="entry name" value="Spore Coat Polysaccharide Biosynthesis Protein SpsA, Chain A"/>
    <property type="match status" value="1"/>
</dbReference>
<dbReference type="HAMAP" id="MF_01631">
    <property type="entry name" value="GlmU"/>
    <property type="match status" value="1"/>
</dbReference>
<dbReference type="InterPro" id="IPR005882">
    <property type="entry name" value="Bifunctional_GlmU"/>
</dbReference>
<dbReference type="InterPro" id="IPR050065">
    <property type="entry name" value="GlmU-like"/>
</dbReference>
<dbReference type="InterPro" id="IPR038009">
    <property type="entry name" value="GlmU_C_LbH"/>
</dbReference>
<dbReference type="InterPro" id="IPR001451">
    <property type="entry name" value="Hexapep"/>
</dbReference>
<dbReference type="InterPro" id="IPR018357">
    <property type="entry name" value="Hexapep_transf_CS"/>
</dbReference>
<dbReference type="InterPro" id="IPR025877">
    <property type="entry name" value="MobA-like_NTP_Trfase"/>
</dbReference>
<dbReference type="InterPro" id="IPR029044">
    <property type="entry name" value="Nucleotide-diphossugar_trans"/>
</dbReference>
<dbReference type="InterPro" id="IPR011004">
    <property type="entry name" value="Trimer_LpxA-like_sf"/>
</dbReference>
<dbReference type="NCBIfam" id="TIGR01173">
    <property type="entry name" value="glmU"/>
    <property type="match status" value="1"/>
</dbReference>
<dbReference type="NCBIfam" id="NF006986">
    <property type="entry name" value="PRK09451.1"/>
    <property type="match status" value="1"/>
</dbReference>
<dbReference type="PANTHER" id="PTHR43584:SF3">
    <property type="entry name" value="BIFUNCTIONAL PROTEIN GLMU"/>
    <property type="match status" value="1"/>
</dbReference>
<dbReference type="PANTHER" id="PTHR43584">
    <property type="entry name" value="NUCLEOTIDYL TRANSFERASE"/>
    <property type="match status" value="1"/>
</dbReference>
<dbReference type="Pfam" id="PF00132">
    <property type="entry name" value="Hexapep"/>
    <property type="match status" value="1"/>
</dbReference>
<dbReference type="Pfam" id="PF12804">
    <property type="entry name" value="NTP_transf_3"/>
    <property type="match status" value="1"/>
</dbReference>
<dbReference type="SUPFAM" id="SSF53448">
    <property type="entry name" value="Nucleotide-diphospho-sugar transferases"/>
    <property type="match status" value="1"/>
</dbReference>
<dbReference type="SUPFAM" id="SSF51161">
    <property type="entry name" value="Trimeric LpxA-like enzymes"/>
    <property type="match status" value="1"/>
</dbReference>
<dbReference type="PROSITE" id="PS00101">
    <property type="entry name" value="HEXAPEP_TRANSFERASES"/>
    <property type="match status" value="1"/>
</dbReference>
<evidence type="ECO:0000255" key="1">
    <source>
        <dbReference type="HAMAP-Rule" id="MF_01631"/>
    </source>
</evidence>
<organism>
    <name type="scientific">Escherichia coli (strain SE11)</name>
    <dbReference type="NCBI Taxonomy" id="409438"/>
    <lineage>
        <taxon>Bacteria</taxon>
        <taxon>Pseudomonadati</taxon>
        <taxon>Pseudomonadota</taxon>
        <taxon>Gammaproteobacteria</taxon>
        <taxon>Enterobacterales</taxon>
        <taxon>Enterobacteriaceae</taxon>
        <taxon>Escherichia</taxon>
    </lineage>
</organism>
<comment type="function">
    <text evidence="1">Catalyzes the last two sequential reactions in the de novo biosynthetic pathway for UDP-N-acetylglucosamine (UDP-GlcNAc). The C-terminal domain catalyzes the transfer of acetyl group from acetyl coenzyme A to glucosamine-1-phosphate (GlcN-1-P) to produce N-acetylglucosamine-1-phosphate (GlcNAc-1-P), which is converted into UDP-GlcNAc by the transfer of uridine 5-monophosphate (from uridine 5-triphosphate), a reaction catalyzed by the N-terminal domain.</text>
</comment>
<comment type="catalytic activity">
    <reaction evidence="1">
        <text>alpha-D-glucosamine 1-phosphate + acetyl-CoA = N-acetyl-alpha-D-glucosamine 1-phosphate + CoA + H(+)</text>
        <dbReference type="Rhea" id="RHEA:13725"/>
        <dbReference type="ChEBI" id="CHEBI:15378"/>
        <dbReference type="ChEBI" id="CHEBI:57287"/>
        <dbReference type="ChEBI" id="CHEBI:57288"/>
        <dbReference type="ChEBI" id="CHEBI:57776"/>
        <dbReference type="ChEBI" id="CHEBI:58516"/>
        <dbReference type="EC" id="2.3.1.157"/>
    </reaction>
</comment>
<comment type="catalytic activity">
    <reaction evidence="1">
        <text>N-acetyl-alpha-D-glucosamine 1-phosphate + UTP + H(+) = UDP-N-acetyl-alpha-D-glucosamine + diphosphate</text>
        <dbReference type="Rhea" id="RHEA:13509"/>
        <dbReference type="ChEBI" id="CHEBI:15378"/>
        <dbReference type="ChEBI" id="CHEBI:33019"/>
        <dbReference type="ChEBI" id="CHEBI:46398"/>
        <dbReference type="ChEBI" id="CHEBI:57705"/>
        <dbReference type="ChEBI" id="CHEBI:57776"/>
        <dbReference type="EC" id="2.7.7.23"/>
    </reaction>
</comment>
<comment type="cofactor">
    <cofactor evidence="1">
        <name>Mg(2+)</name>
        <dbReference type="ChEBI" id="CHEBI:18420"/>
    </cofactor>
    <text evidence="1">Binds 1 Mg(2+) ion per subunit.</text>
</comment>
<comment type="pathway">
    <text evidence="1">Nucleotide-sugar biosynthesis; UDP-N-acetyl-alpha-D-glucosamine biosynthesis; N-acetyl-alpha-D-glucosamine 1-phosphate from alpha-D-glucosamine 6-phosphate (route II): step 2/2.</text>
</comment>
<comment type="pathway">
    <text evidence="1">Nucleotide-sugar biosynthesis; UDP-N-acetyl-alpha-D-glucosamine biosynthesis; UDP-N-acetyl-alpha-D-glucosamine from N-acetyl-alpha-D-glucosamine 1-phosphate: step 1/1.</text>
</comment>
<comment type="pathway">
    <text evidence="1">Bacterial outer membrane biogenesis; LPS lipid A biosynthesis.</text>
</comment>
<comment type="subunit">
    <text evidence="1">Homotrimer.</text>
</comment>
<comment type="subcellular location">
    <subcellularLocation>
        <location evidence="1">Cytoplasm</location>
    </subcellularLocation>
</comment>
<comment type="similarity">
    <text evidence="1">In the N-terminal section; belongs to the N-acetylglucosamine-1-phosphate uridyltransferase family.</text>
</comment>
<comment type="similarity">
    <text evidence="1">In the C-terminal section; belongs to the transferase hexapeptide repeat family.</text>
</comment>
<feature type="chain" id="PRO_1000186450" description="Bifunctional protein GlmU">
    <location>
        <begin position="1"/>
        <end position="456"/>
    </location>
</feature>
<feature type="region of interest" description="Pyrophosphorylase" evidence="1">
    <location>
        <begin position="1"/>
        <end position="229"/>
    </location>
</feature>
<feature type="region of interest" description="Linker" evidence="1">
    <location>
        <begin position="230"/>
        <end position="250"/>
    </location>
</feature>
<feature type="region of interest" description="N-acetyltransferase" evidence="1">
    <location>
        <begin position="251"/>
        <end position="456"/>
    </location>
</feature>
<feature type="active site" description="Proton acceptor" evidence="1">
    <location>
        <position position="363"/>
    </location>
</feature>
<feature type="binding site" evidence="1">
    <location>
        <begin position="11"/>
        <end position="14"/>
    </location>
    <ligand>
        <name>UDP-N-acetyl-alpha-D-glucosamine</name>
        <dbReference type="ChEBI" id="CHEBI:57705"/>
    </ligand>
</feature>
<feature type="binding site" evidence="1">
    <location>
        <position position="25"/>
    </location>
    <ligand>
        <name>UDP-N-acetyl-alpha-D-glucosamine</name>
        <dbReference type="ChEBI" id="CHEBI:57705"/>
    </ligand>
</feature>
<feature type="binding site" evidence="1">
    <location>
        <position position="76"/>
    </location>
    <ligand>
        <name>UDP-N-acetyl-alpha-D-glucosamine</name>
        <dbReference type="ChEBI" id="CHEBI:57705"/>
    </ligand>
</feature>
<feature type="binding site" evidence="1">
    <location>
        <begin position="81"/>
        <end position="82"/>
    </location>
    <ligand>
        <name>UDP-N-acetyl-alpha-D-glucosamine</name>
        <dbReference type="ChEBI" id="CHEBI:57705"/>
    </ligand>
</feature>
<feature type="binding site" evidence="1">
    <location>
        <begin position="103"/>
        <end position="105"/>
    </location>
    <ligand>
        <name>UDP-N-acetyl-alpha-D-glucosamine</name>
        <dbReference type="ChEBI" id="CHEBI:57705"/>
    </ligand>
</feature>
<feature type="binding site" evidence="1">
    <location>
        <position position="105"/>
    </location>
    <ligand>
        <name>Mg(2+)</name>
        <dbReference type="ChEBI" id="CHEBI:18420"/>
    </ligand>
</feature>
<feature type="binding site" evidence="1">
    <location>
        <position position="140"/>
    </location>
    <ligand>
        <name>UDP-N-acetyl-alpha-D-glucosamine</name>
        <dbReference type="ChEBI" id="CHEBI:57705"/>
    </ligand>
</feature>
<feature type="binding site" evidence="1">
    <location>
        <position position="154"/>
    </location>
    <ligand>
        <name>UDP-N-acetyl-alpha-D-glucosamine</name>
        <dbReference type="ChEBI" id="CHEBI:57705"/>
    </ligand>
</feature>
<feature type="binding site" evidence="1">
    <location>
        <position position="169"/>
    </location>
    <ligand>
        <name>UDP-N-acetyl-alpha-D-glucosamine</name>
        <dbReference type="ChEBI" id="CHEBI:57705"/>
    </ligand>
</feature>
<feature type="binding site" evidence="1">
    <location>
        <position position="227"/>
    </location>
    <ligand>
        <name>Mg(2+)</name>
        <dbReference type="ChEBI" id="CHEBI:18420"/>
    </ligand>
</feature>
<feature type="binding site" evidence="1">
    <location>
        <position position="227"/>
    </location>
    <ligand>
        <name>UDP-N-acetyl-alpha-D-glucosamine</name>
        <dbReference type="ChEBI" id="CHEBI:57705"/>
    </ligand>
</feature>
<feature type="binding site" evidence="1">
    <location>
        <position position="333"/>
    </location>
    <ligand>
        <name>UDP-N-acetyl-alpha-D-glucosamine</name>
        <dbReference type="ChEBI" id="CHEBI:57705"/>
    </ligand>
</feature>
<feature type="binding site" evidence="1">
    <location>
        <position position="351"/>
    </location>
    <ligand>
        <name>UDP-N-acetyl-alpha-D-glucosamine</name>
        <dbReference type="ChEBI" id="CHEBI:57705"/>
    </ligand>
</feature>
<feature type="binding site" evidence="1">
    <location>
        <position position="366"/>
    </location>
    <ligand>
        <name>UDP-N-acetyl-alpha-D-glucosamine</name>
        <dbReference type="ChEBI" id="CHEBI:57705"/>
    </ligand>
</feature>
<feature type="binding site" evidence="1">
    <location>
        <position position="377"/>
    </location>
    <ligand>
        <name>UDP-N-acetyl-alpha-D-glucosamine</name>
        <dbReference type="ChEBI" id="CHEBI:57705"/>
    </ligand>
</feature>
<feature type="binding site" evidence="1">
    <location>
        <position position="380"/>
    </location>
    <ligand>
        <name>acetyl-CoA</name>
        <dbReference type="ChEBI" id="CHEBI:57288"/>
    </ligand>
</feature>
<feature type="binding site" evidence="1">
    <location>
        <begin position="386"/>
        <end position="387"/>
    </location>
    <ligand>
        <name>acetyl-CoA</name>
        <dbReference type="ChEBI" id="CHEBI:57288"/>
    </ligand>
</feature>
<feature type="binding site" evidence="1">
    <location>
        <position position="405"/>
    </location>
    <ligand>
        <name>acetyl-CoA</name>
        <dbReference type="ChEBI" id="CHEBI:57288"/>
    </ligand>
</feature>
<feature type="binding site" evidence="1">
    <location>
        <position position="423"/>
    </location>
    <ligand>
        <name>acetyl-CoA</name>
        <dbReference type="ChEBI" id="CHEBI:57288"/>
    </ligand>
</feature>
<feature type="binding site" evidence="1">
    <location>
        <position position="440"/>
    </location>
    <ligand>
        <name>acetyl-CoA</name>
        <dbReference type="ChEBI" id="CHEBI:57288"/>
    </ligand>
</feature>
<keyword id="KW-0012">Acyltransferase</keyword>
<keyword id="KW-0133">Cell shape</keyword>
<keyword id="KW-0961">Cell wall biogenesis/degradation</keyword>
<keyword id="KW-0963">Cytoplasm</keyword>
<keyword id="KW-0460">Magnesium</keyword>
<keyword id="KW-0479">Metal-binding</keyword>
<keyword id="KW-0511">Multifunctional enzyme</keyword>
<keyword id="KW-0548">Nucleotidyltransferase</keyword>
<keyword id="KW-0573">Peptidoglycan synthesis</keyword>
<keyword id="KW-0677">Repeat</keyword>
<keyword id="KW-0808">Transferase</keyword>
<accession>B6I3W7</accession>
<sequence>MLNNAMSVVILAAGKGTRMYSDLPKVLHTLAGKAMVQHVIDAANELGAAHVHLVYGHGGDLLKQALKDDNLNWVLQAEQLGTGHAMQQAAPFFADDEDILMLYGDVPLISVETLQRLRDAKPQGGIGLLTVKLDDPTGYGRITRENGKVTGIVEHKDATDEQRQIQEINTGILIANGADMKRWLAKLTNNNAQGEYYITDIIALAYQEGREIVAVHPQRLSEVEGVNNRLQLSRLERVYQSEQAEKLLLAGVMLRDPARFDLRGTLTHGRDVEIDTNVIIEGNVTLGHRVKIGTGCVIKNSVIGDDCEISPYTVVEDANLAAACTIGPFARLRPGAELLEGAHVGNFVEMKKARLGKGSKAGHLTYLGDAEIGDNVNIGAGTITCNYDGANKFKTIIGDDVFVGSDTQLVAPVTVGKGATIAAGTTVTRNVGENALAISRVPQTQKEGWRRPVKKK</sequence>
<name>GLMU_ECOSE</name>
<gene>
    <name evidence="1" type="primary">glmU</name>
    <name type="ordered locus">ECSE_4020</name>
</gene>
<protein>
    <recommendedName>
        <fullName evidence="1">Bifunctional protein GlmU</fullName>
    </recommendedName>
    <domain>
        <recommendedName>
            <fullName evidence="1">UDP-N-acetylglucosamine pyrophosphorylase</fullName>
            <ecNumber evidence="1">2.7.7.23</ecNumber>
        </recommendedName>
        <alternativeName>
            <fullName evidence="1">N-acetylglucosamine-1-phosphate uridyltransferase</fullName>
        </alternativeName>
    </domain>
    <domain>
        <recommendedName>
            <fullName evidence="1">Glucosamine-1-phosphate N-acetyltransferase</fullName>
            <ecNumber evidence="1">2.3.1.157</ecNumber>
        </recommendedName>
    </domain>
</protein>
<reference key="1">
    <citation type="journal article" date="2008" name="DNA Res.">
        <title>Complete genome sequence and comparative analysis of the wild-type commensal Escherichia coli strain SE11 isolated from a healthy adult.</title>
        <authorList>
            <person name="Oshima K."/>
            <person name="Toh H."/>
            <person name="Ogura Y."/>
            <person name="Sasamoto H."/>
            <person name="Morita H."/>
            <person name="Park S.-H."/>
            <person name="Ooka T."/>
            <person name="Iyoda S."/>
            <person name="Taylor T.D."/>
            <person name="Hayashi T."/>
            <person name="Itoh K."/>
            <person name="Hattori M."/>
        </authorList>
    </citation>
    <scope>NUCLEOTIDE SEQUENCE [LARGE SCALE GENOMIC DNA]</scope>
    <source>
        <strain>SE11</strain>
    </source>
</reference>